<name>AROK_ENTFA</name>
<organism>
    <name type="scientific">Enterococcus faecalis (strain ATCC 700802 / V583)</name>
    <dbReference type="NCBI Taxonomy" id="226185"/>
    <lineage>
        <taxon>Bacteria</taxon>
        <taxon>Bacillati</taxon>
        <taxon>Bacillota</taxon>
        <taxon>Bacilli</taxon>
        <taxon>Lactobacillales</taxon>
        <taxon>Enterococcaceae</taxon>
        <taxon>Enterococcus</taxon>
    </lineage>
</organism>
<comment type="function">
    <text evidence="1">Catalyzes the specific phosphorylation of the 3-hydroxyl group of shikimic acid using ATP as a cosubstrate.</text>
</comment>
<comment type="catalytic activity">
    <reaction evidence="1">
        <text>shikimate + ATP = 3-phosphoshikimate + ADP + H(+)</text>
        <dbReference type="Rhea" id="RHEA:13121"/>
        <dbReference type="ChEBI" id="CHEBI:15378"/>
        <dbReference type="ChEBI" id="CHEBI:30616"/>
        <dbReference type="ChEBI" id="CHEBI:36208"/>
        <dbReference type="ChEBI" id="CHEBI:145989"/>
        <dbReference type="ChEBI" id="CHEBI:456216"/>
        <dbReference type="EC" id="2.7.1.71"/>
    </reaction>
</comment>
<comment type="cofactor">
    <cofactor evidence="1">
        <name>Mg(2+)</name>
        <dbReference type="ChEBI" id="CHEBI:18420"/>
    </cofactor>
    <text evidence="1">Binds 1 Mg(2+) ion per subunit.</text>
</comment>
<comment type="pathway">
    <text evidence="1">Metabolic intermediate biosynthesis; chorismate biosynthesis; chorismate from D-erythrose 4-phosphate and phosphoenolpyruvate: step 5/7.</text>
</comment>
<comment type="subunit">
    <text evidence="1">Monomer.</text>
</comment>
<comment type="subcellular location">
    <subcellularLocation>
        <location evidence="1">Cytoplasm</location>
    </subcellularLocation>
</comment>
<comment type="similarity">
    <text evidence="1">Belongs to the shikimate kinase family.</text>
</comment>
<keyword id="KW-0028">Amino-acid biosynthesis</keyword>
<keyword id="KW-0057">Aromatic amino acid biosynthesis</keyword>
<keyword id="KW-0067">ATP-binding</keyword>
<keyword id="KW-0963">Cytoplasm</keyword>
<keyword id="KW-0418">Kinase</keyword>
<keyword id="KW-0460">Magnesium</keyword>
<keyword id="KW-0479">Metal-binding</keyword>
<keyword id="KW-0547">Nucleotide-binding</keyword>
<keyword id="KW-1185">Reference proteome</keyword>
<keyword id="KW-0808">Transferase</keyword>
<protein>
    <recommendedName>
        <fullName evidence="1">Shikimate kinase</fullName>
        <shortName evidence="1">SK</shortName>
        <ecNumber evidence="1">2.7.1.71</ecNumber>
    </recommendedName>
</protein>
<proteinExistence type="inferred from homology"/>
<reference key="1">
    <citation type="journal article" date="2003" name="Science">
        <title>Role of mobile DNA in the evolution of vancomycin-resistant Enterococcus faecalis.</title>
        <authorList>
            <person name="Paulsen I.T."/>
            <person name="Banerjei L."/>
            <person name="Myers G.S.A."/>
            <person name="Nelson K.E."/>
            <person name="Seshadri R."/>
            <person name="Read T.D."/>
            <person name="Fouts D.E."/>
            <person name="Eisen J.A."/>
            <person name="Gill S.R."/>
            <person name="Heidelberg J.F."/>
            <person name="Tettelin H."/>
            <person name="Dodson R.J."/>
            <person name="Umayam L.A."/>
            <person name="Brinkac L.M."/>
            <person name="Beanan M.J."/>
            <person name="Daugherty S.C."/>
            <person name="DeBoy R.T."/>
            <person name="Durkin S.A."/>
            <person name="Kolonay J.F."/>
            <person name="Madupu R."/>
            <person name="Nelson W.C."/>
            <person name="Vamathevan J.J."/>
            <person name="Tran B."/>
            <person name="Upton J."/>
            <person name="Hansen T."/>
            <person name="Shetty J."/>
            <person name="Khouri H.M."/>
            <person name="Utterback T.R."/>
            <person name="Radune D."/>
            <person name="Ketchum K.A."/>
            <person name="Dougherty B.A."/>
            <person name="Fraser C.M."/>
        </authorList>
    </citation>
    <scope>NUCLEOTIDE SEQUENCE [LARGE SCALE GENOMIC DNA]</scope>
    <source>
        <strain>ATCC 700802 / V583</strain>
    </source>
</reference>
<evidence type="ECO:0000255" key="1">
    <source>
        <dbReference type="HAMAP-Rule" id="MF_00109"/>
    </source>
</evidence>
<dbReference type="EC" id="2.7.1.71" evidence="1"/>
<dbReference type="EMBL" id="AE016830">
    <property type="protein sequence ID" value="AAO81354.1"/>
    <property type="molecule type" value="Genomic_DNA"/>
</dbReference>
<dbReference type="RefSeq" id="NP_815284.1">
    <property type="nucleotide sequence ID" value="NC_004668.1"/>
</dbReference>
<dbReference type="RefSeq" id="WP_002357579.1">
    <property type="nucleotide sequence ID" value="NZ_KE136528.1"/>
</dbReference>
<dbReference type="SMR" id="Q834S1"/>
<dbReference type="STRING" id="226185.EF_1567"/>
<dbReference type="EnsemblBacteria" id="AAO81354">
    <property type="protein sequence ID" value="AAO81354"/>
    <property type="gene ID" value="EF_1567"/>
</dbReference>
<dbReference type="KEGG" id="efa:EF1567"/>
<dbReference type="PATRIC" id="fig|226185.45.peg.1938"/>
<dbReference type="eggNOG" id="COG0703">
    <property type="taxonomic scope" value="Bacteria"/>
</dbReference>
<dbReference type="HOGENOM" id="CLU_057607_4_3_9"/>
<dbReference type="UniPathway" id="UPA00053">
    <property type="reaction ID" value="UER00088"/>
</dbReference>
<dbReference type="Proteomes" id="UP000001415">
    <property type="component" value="Chromosome"/>
</dbReference>
<dbReference type="GO" id="GO:0005829">
    <property type="term" value="C:cytosol"/>
    <property type="evidence" value="ECO:0007669"/>
    <property type="project" value="TreeGrafter"/>
</dbReference>
<dbReference type="GO" id="GO:0005524">
    <property type="term" value="F:ATP binding"/>
    <property type="evidence" value="ECO:0007669"/>
    <property type="project" value="UniProtKB-UniRule"/>
</dbReference>
<dbReference type="GO" id="GO:0000287">
    <property type="term" value="F:magnesium ion binding"/>
    <property type="evidence" value="ECO:0007669"/>
    <property type="project" value="UniProtKB-UniRule"/>
</dbReference>
<dbReference type="GO" id="GO:0004765">
    <property type="term" value="F:shikimate kinase activity"/>
    <property type="evidence" value="ECO:0007669"/>
    <property type="project" value="UniProtKB-UniRule"/>
</dbReference>
<dbReference type="GO" id="GO:0008652">
    <property type="term" value="P:amino acid biosynthetic process"/>
    <property type="evidence" value="ECO:0007669"/>
    <property type="project" value="UniProtKB-KW"/>
</dbReference>
<dbReference type="GO" id="GO:0009073">
    <property type="term" value="P:aromatic amino acid family biosynthetic process"/>
    <property type="evidence" value="ECO:0007669"/>
    <property type="project" value="UniProtKB-KW"/>
</dbReference>
<dbReference type="GO" id="GO:0009423">
    <property type="term" value="P:chorismate biosynthetic process"/>
    <property type="evidence" value="ECO:0007669"/>
    <property type="project" value="UniProtKB-UniRule"/>
</dbReference>
<dbReference type="CDD" id="cd00464">
    <property type="entry name" value="SK"/>
    <property type="match status" value="1"/>
</dbReference>
<dbReference type="Gene3D" id="3.40.50.300">
    <property type="entry name" value="P-loop containing nucleotide triphosphate hydrolases"/>
    <property type="match status" value="1"/>
</dbReference>
<dbReference type="HAMAP" id="MF_00109">
    <property type="entry name" value="Shikimate_kinase"/>
    <property type="match status" value="1"/>
</dbReference>
<dbReference type="InterPro" id="IPR027417">
    <property type="entry name" value="P-loop_NTPase"/>
</dbReference>
<dbReference type="InterPro" id="IPR031322">
    <property type="entry name" value="Shikimate/glucono_kinase"/>
</dbReference>
<dbReference type="InterPro" id="IPR000623">
    <property type="entry name" value="Shikimate_kinase/TSH1"/>
</dbReference>
<dbReference type="InterPro" id="IPR023000">
    <property type="entry name" value="Shikimate_kinase_CS"/>
</dbReference>
<dbReference type="PANTHER" id="PTHR21087">
    <property type="entry name" value="SHIKIMATE KINASE"/>
    <property type="match status" value="1"/>
</dbReference>
<dbReference type="PANTHER" id="PTHR21087:SF16">
    <property type="entry name" value="SHIKIMATE KINASE 1, CHLOROPLASTIC"/>
    <property type="match status" value="1"/>
</dbReference>
<dbReference type="Pfam" id="PF01202">
    <property type="entry name" value="SKI"/>
    <property type="match status" value="1"/>
</dbReference>
<dbReference type="PRINTS" id="PR01100">
    <property type="entry name" value="SHIKIMTKNASE"/>
</dbReference>
<dbReference type="SUPFAM" id="SSF52540">
    <property type="entry name" value="P-loop containing nucleoside triphosphate hydrolases"/>
    <property type="match status" value="1"/>
</dbReference>
<dbReference type="PROSITE" id="PS01128">
    <property type="entry name" value="SHIKIMATE_KINASE"/>
    <property type="match status" value="1"/>
</dbReference>
<feature type="chain" id="PRO_0000237876" description="Shikimate kinase">
    <location>
        <begin position="1"/>
        <end position="168"/>
    </location>
</feature>
<feature type="binding site" evidence="1">
    <location>
        <begin position="11"/>
        <end position="16"/>
    </location>
    <ligand>
        <name>ATP</name>
        <dbReference type="ChEBI" id="CHEBI:30616"/>
    </ligand>
</feature>
<feature type="binding site" evidence="1">
    <location>
        <position position="15"/>
    </location>
    <ligand>
        <name>Mg(2+)</name>
        <dbReference type="ChEBI" id="CHEBI:18420"/>
    </ligand>
</feature>
<feature type="binding site" evidence="1">
    <location>
        <position position="33"/>
    </location>
    <ligand>
        <name>substrate</name>
    </ligand>
</feature>
<feature type="binding site" evidence="1">
    <location>
        <position position="57"/>
    </location>
    <ligand>
        <name>substrate</name>
    </ligand>
</feature>
<feature type="binding site" evidence="1">
    <location>
        <position position="78"/>
    </location>
    <ligand>
        <name>substrate</name>
    </ligand>
</feature>
<feature type="binding site" evidence="1">
    <location>
        <position position="118"/>
    </location>
    <ligand>
        <name>ATP</name>
        <dbReference type="ChEBI" id="CHEBI:30616"/>
    </ligand>
</feature>
<feature type="binding site" evidence="1">
    <location>
        <position position="136"/>
    </location>
    <ligand>
        <name>substrate</name>
    </ligand>
</feature>
<feature type="binding site" evidence="1">
    <location>
        <position position="153"/>
    </location>
    <ligand>
        <name>ATP</name>
        <dbReference type="ChEBI" id="CHEBI:30616"/>
    </ligand>
</feature>
<gene>
    <name evidence="1" type="primary">aroK</name>
    <name type="ordered locus">EF_1567</name>
</gene>
<accession>Q834S1</accession>
<sequence length="168" mass="19004">MESIVLIGFMGAGKTTIGQSLANKLKMPHLDLDTALIEKIGRSIPDYFEKYGEAAFREQETQLLKELSKNTAVLSTGGGIVVGPENRSLLKSFQQVIYLHATPEELLKRITEDTENQRPLAIERSSKEIITLFESRKNFYEECAKMTIDTTNRSPEEIINEILQQLKE</sequence>